<comment type="subcellular location">
    <subcellularLocation>
        <location>Secreted</location>
    </subcellularLocation>
</comment>
<comment type="tissue specificity">
    <text>Expressed by the skin dorsal glands.</text>
</comment>
<comment type="mass spectrometry"/>
<evidence type="ECO:0000269" key="1">
    <source ref="1"/>
</evidence>
<name>UPE61_UPEIN</name>
<dbReference type="SMR" id="P82037"/>
<dbReference type="GO" id="GO:0005576">
    <property type="term" value="C:extracellular region"/>
    <property type="evidence" value="ECO:0007669"/>
    <property type="project" value="UniProtKB-SubCell"/>
</dbReference>
<dbReference type="GO" id="GO:0006952">
    <property type="term" value="P:defense response"/>
    <property type="evidence" value="ECO:0007669"/>
    <property type="project" value="UniProtKB-KW"/>
</dbReference>
<reference key="1">
    <citation type="journal article" date="1996" name="Aust. J. Chem.">
        <title>Novel uperin peptides from the dorsal glands of the australian floodplain toadlet Uperoleia inundata.</title>
        <authorList>
            <person name="Bradford A.M."/>
            <person name="Raftery M.J."/>
            <person name="Bowie J.H."/>
            <person name="Tyler M.J."/>
            <person name="Wallace J.C."/>
            <person name="Adams G.W."/>
            <person name="Severini C."/>
        </authorList>
    </citation>
    <scope>PROTEIN SEQUENCE</scope>
    <scope>MASS SPECTROMETRY</scope>
    <source>
        <tissue>Skin secretion</tissue>
    </source>
</reference>
<protein>
    <recommendedName>
        <fullName>Uperin-6.1</fullName>
    </recommendedName>
</protein>
<sequence>GLAGAISSALDKLKQSQLIKNYAKKLGYPR</sequence>
<keyword id="KW-0878">Amphibian defense peptide</keyword>
<keyword id="KW-0903">Direct protein sequencing</keyword>
<keyword id="KW-0964">Secreted</keyword>
<accession>P82037</accession>
<organism>
    <name type="scientific">Uperoleia inundata</name>
    <name type="common">Floodplain toadlet</name>
    <dbReference type="NCBI Taxonomy" id="104953"/>
    <lineage>
        <taxon>Eukaryota</taxon>
        <taxon>Metazoa</taxon>
        <taxon>Chordata</taxon>
        <taxon>Craniata</taxon>
        <taxon>Vertebrata</taxon>
        <taxon>Euteleostomi</taxon>
        <taxon>Amphibia</taxon>
        <taxon>Batrachia</taxon>
        <taxon>Anura</taxon>
        <taxon>Neobatrachia</taxon>
        <taxon>Myobatrachoidea</taxon>
        <taxon>Myobatrachidae</taxon>
        <taxon>Myobatrachinae</taxon>
        <taxon>Uperoleia</taxon>
    </lineage>
</organism>
<feature type="peptide" id="PRO_0000043863" description="Uperin-6.1">
    <location>
        <begin position="1"/>
        <end position="30"/>
    </location>
</feature>
<proteinExistence type="evidence at protein level"/>